<proteinExistence type="inferred from homology"/>
<protein>
    <recommendedName>
        <fullName>Probable protein BRICK1</fullName>
    </recommendedName>
</protein>
<accession>Q84VA7</accession>
<accession>Q0DW64</accession>
<keyword id="KW-0175">Coiled coil</keyword>
<keyword id="KW-0963">Cytoplasm</keyword>
<keyword id="KW-0206">Cytoskeleton</keyword>
<keyword id="KW-1185">Reference proteome</keyword>
<organism>
    <name type="scientific">Oryza sativa subsp. japonica</name>
    <name type="common">Rice</name>
    <dbReference type="NCBI Taxonomy" id="39947"/>
    <lineage>
        <taxon>Eukaryota</taxon>
        <taxon>Viridiplantae</taxon>
        <taxon>Streptophyta</taxon>
        <taxon>Embryophyta</taxon>
        <taxon>Tracheophyta</taxon>
        <taxon>Spermatophyta</taxon>
        <taxon>Magnoliopsida</taxon>
        <taxon>Liliopsida</taxon>
        <taxon>Poales</taxon>
        <taxon>Poaceae</taxon>
        <taxon>BOP clade</taxon>
        <taxon>Oryzoideae</taxon>
        <taxon>Oryzeae</taxon>
        <taxon>Oryzinae</taxon>
        <taxon>Oryza</taxon>
        <taxon>Oryza sativa</taxon>
    </lineage>
</organism>
<comment type="function">
    <text evidence="1">Involved in regulation of actin and microtubule organization. Part of a WAVE complex that activates the Arp2/3 complex (By similarity).</text>
</comment>
<comment type="subunit">
    <text evidence="1">Binds SCAR.</text>
</comment>
<comment type="subcellular location">
    <subcellularLocation>
        <location evidence="1">Cytoplasm</location>
        <location evidence="1">Cytoskeleton</location>
    </subcellularLocation>
</comment>
<comment type="similarity">
    <text evidence="3">Belongs to the BRK1 family.</text>
</comment>
<sequence length="86" mass="9576">MARAGGHGMGNPVNVGIAVQADWENREFISNISLNVRRLFDFLLRFEATTKSKLASLNEKLDILERKLEVLEVQVSSATTNPSVFN</sequence>
<evidence type="ECO:0000250" key="1"/>
<evidence type="ECO:0000255" key="2"/>
<evidence type="ECO:0000305" key="3"/>
<feature type="chain" id="PRO_0000165370" description="Probable protein BRICK1">
    <location>
        <begin position="1"/>
        <end position="86"/>
    </location>
</feature>
<feature type="coiled-coil region" evidence="2">
    <location>
        <begin position="47"/>
        <end position="81"/>
    </location>
</feature>
<gene>
    <name type="ordered locus">Os02g0829900</name>
    <name type="ordered locus">LOC_Os02g58320</name>
    <name type="ORF">OJ1124_D06.16</name>
</gene>
<name>BRK1_ORYSJ</name>
<reference key="1">
    <citation type="journal article" date="2003" name="Plant Mol. Biol.">
        <title>Identification of rice (Oryza sativa) proteins linked to the cyclin-mediated regulation of the cell cycle.</title>
        <authorList>
            <person name="Cooper B."/>
            <person name="Hutchison D."/>
            <person name="Park S."/>
            <person name="Guimil S."/>
            <person name="Luginbuehl P."/>
            <person name="Ellero C."/>
            <person name="Goff S.A."/>
            <person name="Glazebrook J."/>
        </authorList>
    </citation>
    <scope>NUCLEOTIDE SEQUENCE [MRNA]</scope>
</reference>
<reference key="2">
    <citation type="journal article" date="2005" name="Nature">
        <title>The map-based sequence of the rice genome.</title>
        <authorList>
            <consortium name="International rice genome sequencing project (IRGSP)"/>
        </authorList>
    </citation>
    <scope>NUCLEOTIDE SEQUENCE [LARGE SCALE GENOMIC DNA]</scope>
    <source>
        <strain>cv. Nipponbare</strain>
    </source>
</reference>
<reference key="3">
    <citation type="journal article" date="2008" name="Nucleic Acids Res.">
        <title>The rice annotation project database (RAP-DB): 2008 update.</title>
        <authorList>
            <consortium name="The rice annotation project (RAP)"/>
        </authorList>
    </citation>
    <scope>GENOME REANNOTATION</scope>
    <source>
        <strain>cv. Nipponbare</strain>
    </source>
</reference>
<reference key="4">
    <citation type="journal article" date="2013" name="Rice">
        <title>Improvement of the Oryza sativa Nipponbare reference genome using next generation sequence and optical map data.</title>
        <authorList>
            <person name="Kawahara Y."/>
            <person name="de la Bastide M."/>
            <person name="Hamilton J.P."/>
            <person name="Kanamori H."/>
            <person name="McCombie W.R."/>
            <person name="Ouyang S."/>
            <person name="Schwartz D.C."/>
            <person name="Tanaka T."/>
            <person name="Wu J."/>
            <person name="Zhou S."/>
            <person name="Childs K.L."/>
            <person name="Davidson R.M."/>
            <person name="Lin H."/>
            <person name="Quesada-Ocampo L."/>
            <person name="Vaillancourt B."/>
            <person name="Sakai H."/>
            <person name="Lee S.S."/>
            <person name="Kim J."/>
            <person name="Numa H."/>
            <person name="Itoh T."/>
            <person name="Buell C.R."/>
            <person name="Matsumoto T."/>
        </authorList>
    </citation>
    <scope>GENOME REANNOTATION</scope>
    <source>
        <strain>cv. Nipponbare</strain>
    </source>
</reference>
<dbReference type="EMBL" id="AY224582">
    <property type="protein sequence ID" value="AAO72702.1"/>
    <property type="molecule type" value="mRNA"/>
</dbReference>
<dbReference type="EMBL" id="AP004043">
    <property type="protein sequence ID" value="BAD22945.1"/>
    <property type="molecule type" value="Genomic_DNA"/>
</dbReference>
<dbReference type="EMBL" id="AP008208">
    <property type="protein sequence ID" value="BAF10524.1"/>
    <property type="molecule type" value="Genomic_DNA"/>
</dbReference>
<dbReference type="EMBL" id="AP014958">
    <property type="protein sequence ID" value="BAS81734.1"/>
    <property type="molecule type" value="Genomic_DNA"/>
</dbReference>
<dbReference type="RefSeq" id="XP_015625255.1">
    <property type="nucleotide sequence ID" value="XM_015769769.1"/>
</dbReference>
<dbReference type="SMR" id="Q84VA7"/>
<dbReference type="FunCoup" id="Q84VA7">
    <property type="interactions" value="2004"/>
</dbReference>
<dbReference type="STRING" id="39947.Q84VA7"/>
<dbReference type="PaxDb" id="39947-Q84VA7"/>
<dbReference type="EnsemblPlants" id="Os02t0829900-01">
    <property type="protein sequence ID" value="Os02t0829900-01"/>
    <property type="gene ID" value="Os02g0829900"/>
</dbReference>
<dbReference type="Gramene" id="Os02t0829900-01">
    <property type="protein sequence ID" value="Os02t0829900-01"/>
    <property type="gene ID" value="Os02g0829900"/>
</dbReference>
<dbReference type="KEGG" id="dosa:Os02g0829900"/>
<dbReference type="eggNOG" id="ENOG502S3PY">
    <property type="taxonomic scope" value="Eukaryota"/>
</dbReference>
<dbReference type="HOGENOM" id="CLU_175202_0_0_1"/>
<dbReference type="InParanoid" id="Q84VA7"/>
<dbReference type="OMA" id="WEQREFI"/>
<dbReference type="OrthoDB" id="1883432at2759"/>
<dbReference type="Proteomes" id="UP000000763">
    <property type="component" value="Chromosome 2"/>
</dbReference>
<dbReference type="Proteomes" id="UP000059680">
    <property type="component" value="Chromosome 2"/>
</dbReference>
<dbReference type="GO" id="GO:0005856">
    <property type="term" value="C:cytoskeleton"/>
    <property type="evidence" value="ECO:0007669"/>
    <property type="project" value="UniProtKB-SubCell"/>
</dbReference>
<dbReference type="GO" id="GO:0005886">
    <property type="term" value="C:plasma membrane"/>
    <property type="evidence" value="ECO:0007669"/>
    <property type="project" value="EnsemblPlants"/>
</dbReference>
<dbReference type="GO" id="GO:0031209">
    <property type="term" value="C:SCAR complex"/>
    <property type="evidence" value="ECO:0000318"/>
    <property type="project" value="GO_Central"/>
</dbReference>
<dbReference type="GO" id="GO:0042802">
    <property type="term" value="F:identical protein binding"/>
    <property type="evidence" value="ECO:0007669"/>
    <property type="project" value="EnsemblPlants"/>
</dbReference>
<dbReference type="GO" id="GO:0044877">
    <property type="term" value="F:protein-containing complex binding"/>
    <property type="evidence" value="ECO:0007669"/>
    <property type="project" value="InterPro"/>
</dbReference>
<dbReference type="GO" id="GO:0007015">
    <property type="term" value="P:actin filament organization"/>
    <property type="evidence" value="ECO:0007669"/>
    <property type="project" value="InterPro"/>
</dbReference>
<dbReference type="GO" id="GO:0048870">
    <property type="term" value="P:cell motility"/>
    <property type="evidence" value="ECO:0000318"/>
    <property type="project" value="GO_Central"/>
</dbReference>
<dbReference type="GO" id="GO:0008064">
    <property type="term" value="P:regulation of actin polymerization or depolymerization"/>
    <property type="evidence" value="ECO:0000318"/>
    <property type="project" value="GO_Central"/>
</dbReference>
<dbReference type="GO" id="GO:0010090">
    <property type="term" value="P:trichome morphogenesis"/>
    <property type="evidence" value="ECO:0007669"/>
    <property type="project" value="EnsemblPlants"/>
</dbReference>
<dbReference type="FunFam" id="1.20.5.110:FF:000042">
    <property type="entry name" value="protein BRICK 1"/>
    <property type="match status" value="1"/>
</dbReference>
<dbReference type="Gene3D" id="1.20.5.110">
    <property type="match status" value="1"/>
</dbReference>
<dbReference type="InterPro" id="IPR033378">
    <property type="entry name" value="BRICK1"/>
</dbReference>
<dbReference type="PANTHER" id="PTHR33668">
    <property type="entry name" value="PROTEIN BRICK1"/>
    <property type="match status" value="1"/>
</dbReference>
<dbReference type="PANTHER" id="PTHR33668:SF1">
    <property type="entry name" value="PROTEIN BRICK1"/>
    <property type="match status" value="1"/>
</dbReference>